<keyword id="KW-0997">Cell inner membrane</keyword>
<keyword id="KW-1003">Cell membrane</keyword>
<keyword id="KW-0472">Membrane</keyword>
<keyword id="KW-0808">Transferase</keyword>
<keyword id="KW-0812">Transmembrane</keyword>
<keyword id="KW-1133">Transmembrane helix</keyword>
<evidence type="ECO:0000255" key="1">
    <source>
        <dbReference type="HAMAP-Rule" id="MF_01147"/>
    </source>
</evidence>
<dbReference type="EC" id="2.5.1.145" evidence="1"/>
<dbReference type="EMBL" id="AP007255">
    <property type="protein sequence ID" value="BAE49399.1"/>
    <property type="molecule type" value="Genomic_DNA"/>
</dbReference>
<dbReference type="RefSeq" id="WP_011383038.1">
    <property type="nucleotide sequence ID" value="NC_007626.1"/>
</dbReference>
<dbReference type="SMR" id="Q2W9S6"/>
<dbReference type="STRING" id="342108.amb0595"/>
<dbReference type="KEGG" id="mag:amb0595"/>
<dbReference type="HOGENOM" id="CLU_013386_1_0_5"/>
<dbReference type="OrthoDB" id="871140at2"/>
<dbReference type="UniPathway" id="UPA00664"/>
<dbReference type="Proteomes" id="UP000007058">
    <property type="component" value="Chromosome"/>
</dbReference>
<dbReference type="GO" id="GO:0005886">
    <property type="term" value="C:plasma membrane"/>
    <property type="evidence" value="ECO:0007669"/>
    <property type="project" value="UniProtKB-SubCell"/>
</dbReference>
<dbReference type="GO" id="GO:0008961">
    <property type="term" value="F:phosphatidylglycerol-prolipoprotein diacylglyceryl transferase activity"/>
    <property type="evidence" value="ECO:0007669"/>
    <property type="project" value="UniProtKB-UniRule"/>
</dbReference>
<dbReference type="GO" id="GO:0042158">
    <property type="term" value="P:lipoprotein biosynthetic process"/>
    <property type="evidence" value="ECO:0007669"/>
    <property type="project" value="UniProtKB-UniRule"/>
</dbReference>
<dbReference type="HAMAP" id="MF_01147">
    <property type="entry name" value="Lgt"/>
    <property type="match status" value="1"/>
</dbReference>
<dbReference type="InterPro" id="IPR001640">
    <property type="entry name" value="Lgt"/>
</dbReference>
<dbReference type="NCBIfam" id="TIGR00544">
    <property type="entry name" value="lgt"/>
    <property type="match status" value="1"/>
</dbReference>
<dbReference type="PANTHER" id="PTHR30589:SF0">
    <property type="entry name" value="PHOSPHATIDYLGLYCEROL--PROLIPOPROTEIN DIACYLGLYCERYL TRANSFERASE"/>
    <property type="match status" value="1"/>
</dbReference>
<dbReference type="PANTHER" id="PTHR30589">
    <property type="entry name" value="PROLIPOPROTEIN DIACYLGLYCERYL TRANSFERASE"/>
    <property type="match status" value="1"/>
</dbReference>
<dbReference type="Pfam" id="PF01790">
    <property type="entry name" value="LGT"/>
    <property type="match status" value="1"/>
</dbReference>
<dbReference type="PROSITE" id="PS01311">
    <property type="entry name" value="LGT"/>
    <property type="match status" value="1"/>
</dbReference>
<name>LGT_PARM1</name>
<feature type="chain" id="PRO_1000053451" description="Phosphatidylglycerol--prolipoprotein diacylglyceryl transferase">
    <location>
        <begin position="1"/>
        <end position="269"/>
    </location>
</feature>
<feature type="transmembrane region" description="Helical" evidence="1">
    <location>
        <begin position="17"/>
        <end position="37"/>
    </location>
</feature>
<feature type="transmembrane region" description="Helical" evidence="1">
    <location>
        <begin position="59"/>
        <end position="79"/>
    </location>
</feature>
<feature type="transmembrane region" description="Helical" evidence="1">
    <location>
        <begin position="95"/>
        <end position="115"/>
    </location>
</feature>
<feature type="transmembrane region" description="Helical" evidence="1">
    <location>
        <begin position="123"/>
        <end position="143"/>
    </location>
</feature>
<feature type="transmembrane region" description="Helical" evidence="1">
    <location>
        <begin position="181"/>
        <end position="201"/>
    </location>
</feature>
<feature type="transmembrane region" description="Helical" evidence="1">
    <location>
        <begin position="206"/>
        <end position="226"/>
    </location>
</feature>
<feature type="transmembrane region" description="Helical" evidence="1">
    <location>
        <begin position="242"/>
        <end position="262"/>
    </location>
</feature>
<feature type="binding site" evidence="1">
    <location>
        <position position="142"/>
    </location>
    <ligand>
        <name>a 1,2-diacyl-sn-glycero-3-phospho-(1'-sn-glycerol)</name>
        <dbReference type="ChEBI" id="CHEBI:64716"/>
    </ligand>
</feature>
<sequence>MTFALAYPHIDPIALQIGPIAIRWYALAYIAGLMLGWRYVKFLVARPPNAMTELEVDDFLVWATMGVVLGGRLGYVLFYKPLYYLENPLEIPMVWQGGMSFHGGALGVIVGIIAFSRFRGRNLFQVGDVICCAVPIGLFFGRIANFVNGELFGRVAPDVDWAMVFPGGGPLPRHPSQLYEAGLEGAVLFLVLFGLWRLTGIRHRAGALSGVFLAGYGLARIASEFFRQPDAHLGFLWGGATMGQLLSIPQVLVGLALLAWALRRGAKAA</sequence>
<accession>Q2W9S6</accession>
<protein>
    <recommendedName>
        <fullName evidence="1">Phosphatidylglycerol--prolipoprotein diacylglyceryl transferase</fullName>
        <ecNumber evidence="1">2.5.1.145</ecNumber>
    </recommendedName>
</protein>
<comment type="function">
    <text evidence="1">Catalyzes the transfer of the diacylglyceryl group from phosphatidylglycerol to the sulfhydryl group of the N-terminal cysteine of a prolipoprotein, the first step in the formation of mature lipoproteins.</text>
</comment>
<comment type="catalytic activity">
    <reaction evidence="1">
        <text>L-cysteinyl-[prolipoprotein] + a 1,2-diacyl-sn-glycero-3-phospho-(1'-sn-glycerol) = an S-1,2-diacyl-sn-glyceryl-L-cysteinyl-[prolipoprotein] + sn-glycerol 1-phosphate + H(+)</text>
        <dbReference type="Rhea" id="RHEA:56712"/>
        <dbReference type="Rhea" id="RHEA-COMP:14679"/>
        <dbReference type="Rhea" id="RHEA-COMP:14680"/>
        <dbReference type="ChEBI" id="CHEBI:15378"/>
        <dbReference type="ChEBI" id="CHEBI:29950"/>
        <dbReference type="ChEBI" id="CHEBI:57685"/>
        <dbReference type="ChEBI" id="CHEBI:64716"/>
        <dbReference type="ChEBI" id="CHEBI:140658"/>
        <dbReference type="EC" id="2.5.1.145"/>
    </reaction>
</comment>
<comment type="pathway">
    <text evidence="1">Protein modification; lipoprotein biosynthesis (diacylglyceryl transfer).</text>
</comment>
<comment type="subcellular location">
    <subcellularLocation>
        <location evidence="1">Cell inner membrane</location>
        <topology evidence="1">Multi-pass membrane protein</topology>
    </subcellularLocation>
</comment>
<comment type="similarity">
    <text evidence="1">Belongs to the Lgt family.</text>
</comment>
<gene>
    <name evidence="1" type="primary">lgt</name>
    <name type="ordered locus">amb0595</name>
</gene>
<proteinExistence type="inferred from homology"/>
<reference key="1">
    <citation type="journal article" date="2005" name="DNA Res.">
        <title>Complete genome sequence of the facultative anaerobic magnetotactic bacterium Magnetospirillum sp. strain AMB-1.</title>
        <authorList>
            <person name="Matsunaga T."/>
            <person name="Okamura Y."/>
            <person name="Fukuda Y."/>
            <person name="Wahyudi A.T."/>
            <person name="Murase Y."/>
            <person name="Takeyama H."/>
        </authorList>
    </citation>
    <scope>NUCLEOTIDE SEQUENCE [LARGE SCALE GENOMIC DNA]</scope>
    <source>
        <strain>ATCC 700264 / AMB-1</strain>
    </source>
</reference>
<organism>
    <name type="scientific">Paramagnetospirillum magneticum (strain ATCC 700264 / AMB-1)</name>
    <name type="common">Magnetospirillum magneticum</name>
    <dbReference type="NCBI Taxonomy" id="342108"/>
    <lineage>
        <taxon>Bacteria</taxon>
        <taxon>Pseudomonadati</taxon>
        <taxon>Pseudomonadota</taxon>
        <taxon>Alphaproteobacteria</taxon>
        <taxon>Rhodospirillales</taxon>
        <taxon>Magnetospirillaceae</taxon>
        <taxon>Paramagnetospirillum</taxon>
    </lineage>
</organism>